<keyword id="KW-0004">4Fe-4S</keyword>
<keyword id="KW-0067">ATP-binding</keyword>
<keyword id="KW-0077">Bacteriochlorophyll biosynthesis</keyword>
<keyword id="KW-0149">Chlorophyll biosynthesis</keyword>
<keyword id="KW-0408">Iron</keyword>
<keyword id="KW-0411">Iron-sulfur</keyword>
<keyword id="KW-0479">Metal-binding</keyword>
<keyword id="KW-0547">Nucleotide-binding</keyword>
<keyword id="KW-0560">Oxidoreductase</keyword>
<keyword id="KW-0602">Photosynthesis</keyword>
<comment type="function">
    <text evidence="1">Component of the dark-operative protochlorophyllide reductase (DPOR) that uses Mg-ATP and reduced ferredoxin to reduce ring D of protochlorophyllide (Pchlide) to form chlorophyllide a (Chlide). This reaction is light-independent. The NB-protein (BchN-BchB) is the catalytic component of the complex.</text>
</comment>
<comment type="catalytic activity">
    <reaction evidence="1">
        <text>chlorophyllide a + oxidized 2[4Fe-4S]-[ferredoxin] + 2 ADP + 2 phosphate = protochlorophyllide a + reduced 2[4Fe-4S]-[ferredoxin] + 2 ATP + 2 H2O</text>
        <dbReference type="Rhea" id="RHEA:28202"/>
        <dbReference type="Rhea" id="RHEA-COMP:10002"/>
        <dbReference type="Rhea" id="RHEA-COMP:10004"/>
        <dbReference type="ChEBI" id="CHEBI:15377"/>
        <dbReference type="ChEBI" id="CHEBI:30616"/>
        <dbReference type="ChEBI" id="CHEBI:33722"/>
        <dbReference type="ChEBI" id="CHEBI:33723"/>
        <dbReference type="ChEBI" id="CHEBI:43474"/>
        <dbReference type="ChEBI" id="CHEBI:83348"/>
        <dbReference type="ChEBI" id="CHEBI:83350"/>
        <dbReference type="ChEBI" id="CHEBI:456216"/>
        <dbReference type="EC" id="1.3.7.7"/>
    </reaction>
</comment>
<comment type="cofactor">
    <cofactor evidence="1">
        <name>[4Fe-4S] cluster</name>
        <dbReference type="ChEBI" id="CHEBI:49883"/>
    </cofactor>
    <text evidence="1">Binds 1 [4Fe-4S] cluster per heterodimer. The cluster is bound at the heterodimer interface by residues from both subunits.</text>
</comment>
<comment type="pathway">
    <text evidence="1">Porphyrin-containing compound metabolism; bacteriochlorophyll biosynthesis (light-independent).</text>
</comment>
<comment type="subunit">
    <text evidence="1">Protochlorophyllide reductase is composed of three subunits; BchL, BchN and BchB. Forms a heterotetramer of two BchB and two BchN subunits.</text>
</comment>
<comment type="similarity">
    <text evidence="1">Belongs to the ChlB/BchB/BchZ family.</text>
</comment>
<feature type="chain" id="PRO_1000120535" description="Light-independent protochlorophyllide reductase subunit B">
    <location>
        <begin position="1"/>
        <end position="540"/>
    </location>
</feature>
<feature type="active site" description="Proton donor" evidence="1">
    <location>
        <position position="287"/>
    </location>
</feature>
<feature type="binding site" evidence="1">
    <location>
        <position position="36"/>
    </location>
    <ligand>
        <name>[4Fe-4S] cluster</name>
        <dbReference type="ChEBI" id="CHEBI:49883"/>
        <note>ligand shared with heterodimeric partner</note>
    </ligand>
</feature>
<feature type="binding site" evidence="1">
    <location>
        <begin position="422"/>
        <end position="423"/>
    </location>
    <ligand>
        <name>substrate</name>
    </ligand>
</feature>
<reference key="1">
    <citation type="submission" date="2008-05" db="EMBL/GenBank/DDBJ databases">
        <title>Complete sequence of Rhodopseudomonas palustris TIE-1.</title>
        <authorList>
            <consortium name="US DOE Joint Genome Institute"/>
            <person name="Lucas S."/>
            <person name="Copeland A."/>
            <person name="Lapidus A."/>
            <person name="Glavina del Rio T."/>
            <person name="Dalin E."/>
            <person name="Tice H."/>
            <person name="Pitluck S."/>
            <person name="Chain P."/>
            <person name="Malfatti S."/>
            <person name="Shin M."/>
            <person name="Vergez L."/>
            <person name="Lang D."/>
            <person name="Schmutz J."/>
            <person name="Larimer F."/>
            <person name="Land M."/>
            <person name="Hauser L."/>
            <person name="Kyrpides N."/>
            <person name="Mikhailova N."/>
            <person name="Emerson D."/>
            <person name="Newman D.K."/>
            <person name="Roden E."/>
            <person name="Richardson P."/>
        </authorList>
    </citation>
    <scope>NUCLEOTIDE SEQUENCE [LARGE SCALE GENOMIC DNA]</scope>
    <source>
        <strain>TIE-1</strain>
    </source>
</reference>
<evidence type="ECO:0000255" key="1">
    <source>
        <dbReference type="HAMAP-Rule" id="MF_00353"/>
    </source>
</evidence>
<proteinExistence type="inferred from homology"/>
<gene>
    <name evidence="1" type="primary">bchB</name>
    <name type="ordered locus">Rpal_1731</name>
</gene>
<name>BCHB_RHOPT</name>
<protein>
    <recommendedName>
        <fullName evidence="1">Light-independent protochlorophyllide reductase subunit B</fullName>
        <shortName evidence="1">DPOR subunit B</shortName>
        <shortName evidence="1">LI-POR subunit B</shortName>
        <ecNumber evidence="1">1.3.7.7</ecNumber>
    </recommendedName>
</protein>
<organism>
    <name type="scientific">Rhodopseudomonas palustris (strain TIE-1)</name>
    <dbReference type="NCBI Taxonomy" id="395960"/>
    <lineage>
        <taxon>Bacteria</taxon>
        <taxon>Pseudomonadati</taxon>
        <taxon>Pseudomonadota</taxon>
        <taxon>Alphaproteobacteria</taxon>
        <taxon>Hyphomicrobiales</taxon>
        <taxon>Nitrobacteraceae</taxon>
        <taxon>Rhodopseudomonas</taxon>
    </lineage>
</organism>
<accession>B3Q7C5</accession>
<sequence length="540" mass="58462">MQLTVWTYEGPPHVGAMRVATGMEKLHYVLHAPQGDTYADLLFTMIERRNKRPPVTYTTFAARDLGKDTAELFMSAARNAYARFKPQAMIVGASCTGSLIQDDPGGLAKSLGFSIPVIPIDLPAYQRKENWGASETFYQLVRAIAGPKAPAPGTKRPERAAGQRAKCNLLGPTALGFRHRDDITEITRLLGQLGIDVNVVAPMGATPADLTRLGEADFNVVLYPEVASQAASWLQRIFHQPFTKTIPIGVSATREFVREVAGLAGVDPEPVLAAASTRLPWYSHSVDSTYLTNKRVFIFGDATHAIASARIASEELGFKVVGLGTYSREFGRDVREAAAKYGVEALITDDYLEVEAKVAELHPELVLGTQMERHIAKRLGVPCAVISAPVHVQDFPARYAPQMGFEGANVIFDTWVHPLMMGLEEHLLAMFKDDFEFKDGALPSHLGTGHAPASAPAAAEVAVALPQSAPVLDGAASNPAPVATAPTGAVWAPEAEKELLKIPFFVRGKARRNTERFANENGVATITVETLYDAKAHFAR</sequence>
<dbReference type="EC" id="1.3.7.7" evidence="1"/>
<dbReference type="EMBL" id="CP001096">
    <property type="protein sequence ID" value="ACF00259.1"/>
    <property type="molecule type" value="Genomic_DNA"/>
</dbReference>
<dbReference type="RefSeq" id="WP_011157102.1">
    <property type="nucleotide sequence ID" value="NC_011004.1"/>
</dbReference>
<dbReference type="SMR" id="B3Q7C5"/>
<dbReference type="GeneID" id="66892573"/>
<dbReference type="KEGG" id="rpt:Rpal_1731"/>
<dbReference type="HOGENOM" id="CLU_025470_0_0_5"/>
<dbReference type="OrthoDB" id="5717231at2"/>
<dbReference type="UniPathway" id="UPA00671"/>
<dbReference type="Proteomes" id="UP000001725">
    <property type="component" value="Chromosome"/>
</dbReference>
<dbReference type="GO" id="GO:0051539">
    <property type="term" value="F:4 iron, 4 sulfur cluster binding"/>
    <property type="evidence" value="ECO:0007669"/>
    <property type="project" value="UniProtKB-UniRule"/>
</dbReference>
<dbReference type="GO" id="GO:0005524">
    <property type="term" value="F:ATP binding"/>
    <property type="evidence" value="ECO:0007669"/>
    <property type="project" value="UniProtKB-UniRule"/>
</dbReference>
<dbReference type="GO" id="GO:0046872">
    <property type="term" value="F:metal ion binding"/>
    <property type="evidence" value="ECO:0007669"/>
    <property type="project" value="UniProtKB-KW"/>
</dbReference>
<dbReference type="GO" id="GO:0016730">
    <property type="term" value="F:oxidoreductase activity, acting on iron-sulfur proteins as donors"/>
    <property type="evidence" value="ECO:0007669"/>
    <property type="project" value="InterPro"/>
</dbReference>
<dbReference type="GO" id="GO:0016636">
    <property type="term" value="F:oxidoreductase activity, acting on the CH-CH group of donors, iron-sulfur protein as acceptor"/>
    <property type="evidence" value="ECO:0007669"/>
    <property type="project" value="UniProtKB-UniRule"/>
</dbReference>
<dbReference type="GO" id="GO:0036070">
    <property type="term" value="P:light-independent bacteriochlorophyll biosynthetic process"/>
    <property type="evidence" value="ECO:0007669"/>
    <property type="project" value="UniProtKB-UniRule"/>
</dbReference>
<dbReference type="GO" id="GO:0019685">
    <property type="term" value="P:photosynthesis, dark reaction"/>
    <property type="evidence" value="ECO:0007669"/>
    <property type="project" value="InterPro"/>
</dbReference>
<dbReference type="Gene3D" id="1.20.89.20">
    <property type="match status" value="1"/>
</dbReference>
<dbReference type="Gene3D" id="3.40.50.1980">
    <property type="entry name" value="Nitrogenase molybdenum iron protein domain"/>
    <property type="match status" value="3"/>
</dbReference>
<dbReference type="Gene3D" id="1.10.8.550">
    <property type="entry name" value="Proto-chlorophyllide reductase 57 kD subunit B"/>
    <property type="match status" value="1"/>
</dbReference>
<dbReference type="HAMAP" id="MF_00353">
    <property type="entry name" value="ChlB_BchB"/>
    <property type="match status" value="1"/>
</dbReference>
<dbReference type="InterPro" id="IPR050152">
    <property type="entry name" value="ChlB/BchB/BchZ"/>
</dbReference>
<dbReference type="InterPro" id="IPR013580">
    <property type="entry name" value="LI-POR_suB-like_C"/>
</dbReference>
<dbReference type="InterPro" id="IPR000510">
    <property type="entry name" value="Nase/OxRdtase_comp1"/>
</dbReference>
<dbReference type="InterPro" id="IPR042298">
    <property type="entry name" value="P-CP_red_C"/>
</dbReference>
<dbReference type="InterPro" id="IPR005969">
    <property type="entry name" value="Protochl_reductB"/>
</dbReference>
<dbReference type="InterPro" id="IPR016209">
    <property type="entry name" value="Protochlorophyllide_Rdtase"/>
</dbReference>
<dbReference type="NCBIfam" id="TIGR01278">
    <property type="entry name" value="DPOR_BchB"/>
    <property type="match status" value="1"/>
</dbReference>
<dbReference type="PANTHER" id="PTHR33712">
    <property type="entry name" value="LIGHT-INDEPENDENT PROTOCHLOROPHYLLIDE REDUCTASE SUBUNIT B"/>
    <property type="match status" value="1"/>
</dbReference>
<dbReference type="PANTHER" id="PTHR33712:SF7">
    <property type="entry name" value="LIGHT-INDEPENDENT PROTOCHLOROPHYLLIDE REDUCTASE SUBUNIT B"/>
    <property type="match status" value="1"/>
</dbReference>
<dbReference type="Pfam" id="PF00148">
    <property type="entry name" value="Oxidored_nitro"/>
    <property type="match status" value="1"/>
</dbReference>
<dbReference type="Pfam" id="PF08369">
    <property type="entry name" value="PCP_red"/>
    <property type="match status" value="1"/>
</dbReference>
<dbReference type="PIRSF" id="PIRSF000163">
    <property type="entry name" value="PCP_ChlB"/>
    <property type="match status" value="1"/>
</dbReference>
<dbReference type="SUPFAM" id="SSF53807">
    <property type="entry name" value="Helical backbone' metal receptor"/>
    <property type="match status" value="1"/>
</dbReference>